<proteinExistence type="inferred from homology"/>
<gene>
    <name evidence="1" type="primary">tsf</name>
    <name type="ordered locus">Rpic_1279</name>
</gene>
<feature type="chain" id="PRO_1000116776" description="Elongation factor Ts">
    <location>
        <begin position="1"/>
        <end position="292"/>
    </location>
</feature>
<feature type="region of interest" description="Involved in Mg(2+) ion dislocation from EF-Tu" evidence="1">
    <location>
        <begin position="80"/>
        <end position="83"/>
    </location>
</feature>
<accession>B2UB07</accession>
<protein>
    <recommendedName>
        <fullName evidence="1">Elongation factor Ts</fullName>
        <shortName evidence="1">EF-Ts</shortName>
    </recommendedName>
</protein>
<name>EFTS_RALPJ</name>
<keyword id="KW-0963">Cytoplasm</keyword>
<keyword id="KW-0251">Elongation factor</keyword>
<keyword id="KW-0648">Protein biosynthesis</keyword>
<comment type="function">
    <text evidence="1">Associates with the EF-Tu.GDP complex and induces the exchange of GDP to GTP. It remains bound to the aminoacyl-tRNA.EF-Tu.GTP complex up to the GTP hydrolysis stage on the ribosome.</text>
</comment>
<comment type="subcellular location">
    <subcellularLocation>
        <location evidence="1">Cytoplasm</location>
    </subcellularLocation>
</comment>
<comment type="similarity">
    <text evidence="1">Belongs to the EF-Ts family.</text>
</comment>
<evidence type="ECO:0000255" key="1">
    <source>
        <dbReference type="HAMAP-Rule" id="MF_00050"/>
    </source>
</evidence>
<organism>
    <name type="scientific">Ralstonia pickettii (strain 12J)</name>
    <dbReference type="NCBI Taxonomy" id="402626"/>
    <lineage>
        <taxon>Bacteria</taxon>
        <taxon>Pseudomonadati</taxon>
        <taxon>Pseudomonadota</taxon>
        <taxon>Betaproteobacteria</taxon>
        <taxon>Burkholderiales</taxon>
        <taxon>Burkholderiaceae</taxon>
        <taxon>Ralstonia</taxon>
    </lineage>
</organism>
<sequence>MAAITASMVAELRAKTDAPMMECKKALTEAEGNLEKAEEILRVKLGNKAGKASSRVTAEGVVAAFVEGTTGALVEVNCETDFVSKNDDFLAFTNEVAKLIAQKNPADVAALSALSIGDETVEAVRTRLIGKIGENMTIRRFQRFEGTQLTSYLHGTRIGVMVAFEGNEVAAKDAAMQAAAMKPVSLSADDVPAELVAKERSVAEQKAAESGKPAEIVAKMVEGSVQKYLKEVSLLNQPFVKNDKQTVEQMLKAANTTVKAFTLYVVGEGIEKKQDDFAAEVAAQVAAAKQQA</sequence>
<dbReference type="EMBL" id="CP001068">
    <property type="protein sequence ID" value="ACD26423.1"/>
    <property type="molecule type" value="Genomic_DNA"/>
</dbReference>
<dbReference type="SMR" id="B2UB07"/>
<dbReference type="STRING" id="402626.Rpic_1279"/>
<dbReference type="KEGG" id="rpi:Rpic_1279"/>
<dbReference type="eggNOG" id="COG0264">
    <property type="taxonomic scope" value="Bacteria"/>
</dbReference>
<dbReference type="HOGENOM" id="CLU_047155_0_2_4"/>
<dbReference type="GO" id="GO:0005737">
    <property type="term" value="C:cytoplasm"/>
    <property type="evidence" value="ECO:0007669"/>
    <property type="project" value="UniProtKB-SubCell"/>
</dbReference>
<dbReference type="GO" id="GO:0003746">
    <property type="term" value="F:translation elongation factor activity"/>
    <property type="evidence" value="ECO:0007669"/>
    <property type="project" value="UniProtKB-UniRule"/>
</dbReference>
<dbReference type="CDD" id="cd14275">
    <property type="entry name" value="UBA_EF-Ts"/>
    <property type="match status" value="1"/>
</dbReference>
<dbReference type="FunFam" id="1.10.286.20:FF:000001">
    <property type="entry name" value="Elongation factor Ts"/>
    <property type="match status" value="1"/>
</dbReference>
<dbReference type="FunFam" id="1.10.8.10:FF:000001">
    <property type="entry name" value="Elongation factor Ts"/>
    <property type="match status" value="1"/>
</dbReference>
<dbReference type="Gene3D" id="1.10.286.20">
    <property type="match status" value="1"/>
</dbReference>
<dbReference type="Gene3D" id="1.10.8.10">
    <property type="entry name" value="DNA helicase RuvA subunit, C-terminal domain"/>
    <property type="match status" value="1"/>
</dbReference>
<dbReference type="Gene3D" id="3.30.479.20">
    <property type="entry name" value="Elongation factor Ts, dimerisation domain"/>
    <property type="match status" value="2"/>
</dbReference>
<dbReference type="HAMAP" id="MF_00050">
    <property type="entry name" value="EF_Ts"/>
    <property type="match status" value="1"/>
</dbReference>
<dbReference type="InterPro" id="IPR036402">
    <property type="entry name" value="EF-Ts_dimer_sf"/>
</dbReference>
<dbReference type="InterPro" id="IPR001816">
    <property type="entry name" value="Transl_elong_EFTs/EF1B"/>
</dbReference>
<dbReference type="InterPro" id="IPR014039">
    <property type="entry name" value="Transl_elong_EFTs/EF1B_dimer"/>
</dbReference>
<dbReference type="InterPro" id="IPR018101">
    <property type="entry name" value="Transl_elong_Ts_CS"/>
</dbReference>
<dbReference type="InterPro" id="IPR009060">
    <property type="entry name" value="UBA-like_sf"/>
</dbReference>
<dbReference type="NCBIfam" id="TIGR00116">
    <property type="entry name" value="tsf"/>
    <property type="match status" value="1"/>
</dbReference>
<dbReference type="PANTHER" id="PTHR11741">
    <property type="entry name" value="ELONGATION FACTOR TS"/>
    <property type="match status" value="1"/>
</dbReference>
<dbReference type="PANTHER" id="PTHR11741:SF0">
    <property type="entry name" value="ELONGATION FACTOR TS, MITOCHONDRIAL"/>
    <property type="match status" value="1"/>
</dbReference>
<dbReference type="Pfam" id="PF00889">
    <property type="entry name" value="EF_TS"/>
    <property type="match status" value="1"/>
</dbReference>
<dbReference type="SUPFAM" id="SSF54713">
    <property type="entry name" value="Elongation factor Ts (EF-Ts), dimerisation domain"/>
    <property type="match status" value="2"/>
</dbReference>
<dbReference type="SUPFAM" id="SSF46934">
    <property type="entry name" value="UBA-like"/>
    <property type="match status" value="1"/>
</dbReference>
<dbReference type="PROSITE" id="PS01127">
    <property type="entry name" value="EF_TS_2"/>
    <property type="match status" value="1"/>
</dbReference>
<reference key="1">
    <citation type="submission" date="2008-05" db="EMBL/GenBank/DDBJ databases">
        <title>Complete sequence of chromosome 1 of Ralstonia pickettii 12J.</title>
        <authorList>
            <person name="Lucas S."/>
            <person name="Copeland A."/>
            <person name="Lapidus A."/>
            <person name="Glavina del Rio T."/>
            <person name="Dalin E."/>
            <person name="Tice H."/>
            <person name="Bruce D."/>
            <person name="Goodwin L."/>
            <person name="Pitluck S."/>
            <person name="Meincke L."/>
            <person name="Brettin T."/>
            <person name="Detter J.C."/>
            <person name="Han C."/>
            <person name="Kuske C.R."/>
            <person name="Schmutz J."/>
            <person name="Larimer F."/>
            <person name="Land M."/>
            <person name="Hauser L."/>
            <person name="Kyrpides N."/>
            <person name="Mikhailova N."/>
            <person name="Marsh T."/>
            <person name="Richardson P."/>
        </authorList>
    </citation>
    <scope>NUCLEOTIDE SEQUENCE [LARGE SCALE GENOMIC DNA]</scope>
    <source>
        <strain>12J</strain>
    </source>
</reference>